<reference key="1">
    <citation type="journal article" date="2004" name="Plant Physiol.">
        <title>The Arabidopsis cyclophilin gene family.</title>
        <authorList>
            <person name="Romano P.G.N."/>
            <person name="Horton P."/>
            <person name="Gray J.E."/>
        </authorList>
    </citation>
    <scope>NUCLEOTIDE SEQUENCE [MRNA]</scope>
    <scope>TISSUE SPECIFICITY</scope>
    <scope>GENE FAMILY</scope>
    <scope>NOMENCLATURE</scope>
</reference>
<reference key="2">
    <citation type="journal article" date="2000" name="DNA Res.">
        <title>Structural analysis of Arabidopsis thaliana chromosome 3. II. Sequence features of the 4,251,695 bp regions covered by 90 P1, TAC and BAC clones.</title>
        <authorList>
            <person name="Kaneko T."/>
            <person name="Katoh T."/>
            <person name="Sato S."/>
            <person name="Nakamura Y."/>
            <person name="Asamizu E."/>
            <person name="Tabata S."/>
        </authorList>
    </citation>
    <scope>NUCLEOTIDE SEQUENCE [LARGE SCALE GENOMIC DNA]</scope>
    <source>
        <strain>cv. Columbia</strain>
    </source>
</reference>
<reference key="3">
    <citation type="journal article" date="2017" name="Plant J.">
        <title>Araport11: a complete reannotation of the Arabidopsis thaliana reference genome.</title>
        <authorList>
            <person name="Cheng C.Y."/>
            <person name="Krishnakumar V."/>
            <person name="Chan A.P."/>
            <person name="Thibaud-Nissen F."/>
            <person name="Schobel S."/>
            <person name="Town C.D."/>
        </authorList>
    </citation>
    <scope>GENOME REANNOTATION</scope>
    <source>
        <strain>cv. Columbia</strain>
    </source>
</reference>
<reference key="4">
    <citation type="submission" date="2006-09" db="EMBL/GenBank/DDBJ databases">
        <title>Arabidopsis ORF clones.</title>
        <authorList>
            <person name="Bautista V.R."/>
            <person name="Kim C.J."/>
            <person name="Chen H."/>
            <person name="Quinitio C."/>
            <person name="Ecker J.R."/>
        </authorList>
    </citation>
    <scope>NUCLEOTIDE SEQUENCE [LARGE SCALE MRNA]</scope>
</reference>
<reference key="5">
    <citation type="journal article" date="2004" name="Plant Physiol.">
        <title>Immunophilins and parvulins. Superfamily of peptidyl prolyl isomerases in Arabidopsis.</title>
        <authorList>
            <person name="He Z."/>
            <person name="Li L."/>
            <person name="Luan S."/>
        </authorList>
    </citation>
    <scope>TISSUE SPECIFICITY</scope>
    <scope>GENE FAMILY</scope>
    <scope>NOMENCLATURE</scope>
</reference>
<feature type="chain" id="PRO_0000429939" description="Peptidyl-prolyl cis-trans isomerase CYP26-1">
    <location>
        <begin position="1"/>
        <end position="232"/>
    </location>
</feature>
<feature type="transmembrane region" description="Helical">
    <location>
        <begin position="212"/>
        <end position="232"/>
    </location>
</feature>
<feature type="domain" description="PPIase cyclophilin-type" evidence="3">
    <location>
        <begin position="7"/>
        <end position="166"/>
    </location>
</feature>
<feature type="glycosylation site" description="N-linked (GlcNAc...) asparagine" evidence="2">
    <location>
        <position position="108"/>
    </location>
</feature>
<proteinExistence type="evidence at transcript level"/>
<organism>
    <name type="scientific">Arabidopsis thaliana</name>
    <name type="common">Mouse-ear cress</name>
    <dbReference type="NCBI Taxonomy" id="3702"/>
    <lineage>
        <taxon>Eukaryota</taxon>
        <taxon>Viridiplantae</taxon>
        <taxon>Streptophyta</taxon>
        <taxon>Embryophyta</taxon>
        <taxon>Tracheophyta</taxon>
        <taxon>Spermatophyta</taxon>
        <taxon>Magnoliopsida</taxon>
        <taxon>eudicotyledons</taxon>
        <taxon>Gunneridae</taxon>
        <taxon>Pentapetalae</taxon>
        <taxon>rosids</taxon>
        <taxon>malvids</taxon>
        <taxon>Brassicales</taxon>
        <taxon>Brassicaceae</taxon>
        <taxon>Camelineae</taxon>
        <taxon>Arabidopsis</taxon>
    </lineage>
</organism>
<name>CP26A_ARATH</name>
<evidence type="ECO:0000250" key="1"/>
<evidence type="ECO:0000255" key="2"/>
<evidence type="ECO:0000255" key="3">
    <source>
        <dbReference type="PROSITE-ProRule" id="PRU00156"/>
    </source>
</evidence>
<evidence type="ECO:0000269" key="4">
    <source>
    </source>
</evidence>
<evidence type="ECO:0000269" key="5">
    <source>
    </source>
</evidence>
<evidence type="ECO:0000305" key="6"/>
<gene>
    <name type="primary">CYP26-1</name>
    <name type="ordered locus">At3g22920</name>
    <name type="ORF">F5N5</name>
</gene>
<accession>Q9LIK6</accession>
<keyword id="KW-0143">Chaperone</keyword>
<keyword id="KW-0325">Glycoprotein</keyword>
<keyword id="KW-0413">Isomerase</keyword>
<keyword id="KW-0472">Membrane</keyword>
<keyword id="KW-1185">Reference proteome</keyword>
<keyword id="KW-0697">Rotamase</keyword>
<keyword id="KW-0812">Transmembrane</keyword>
<keyword id="KW-1133">Transmembrane helix</keyword>
<sequence>MANPKVFFDLTVDGKPAGRIVIELFADLTPRTAENFRGLCTGERGIGKCGKPIHYKGSTFDHIVPDLMWCGGDIIFENEPIHSEELDDEYFILNHEDGPGIISMADSNGSQFQIHMKDYGLQVDGDHVVIGKVVEGLDLMRNIEKEVITTTTRTPSKPVVIADCGELSDYRSERCYLMKNIEKEVIIKTAKDNKPVVIADCGGLSDDRSERYYLINIVVACMVLMCFWSWFV</sequence>
<comment type="function">
    <text evidence="1">PPIases accelerate the folding of proteins. It catalyzes the cis-trans isomerization of proline imidic peptide bonds in oligopeptides (By similarity).</text>
</comment>
<comment type="catalytic activity">
    <reaction>
        <text>[protein]-peptidylproline (omega=180) = [protein]-peptidylproline (omega=0)</text>
        <dbReference type="Rhea" id="RHEA:16237"/>
        <dbReference type="Rhea" id="RHEA-COMP:10747"/>
        <dbReference type="Rhea" id="RHEA-COMP:10748"/>
        <dbReference type="ChEBI" id="CHEBI:83833"/>
        <dbReference type="ChEBI" id="CHEBI:83834"/>
        <dbReference type="EC" id="5.2.1.8"/>
    </reaction>
</comment>
<comment type="subcellular location">
    <subcellularLocation>
        <location evidence="6">Membrane</location>
        <topology evidence="6">Single-pass membrane protein</topology>
    </subcellularLocation>
</comment>
<comment type="tissue specificity">
    <text evidence="4 5">Expressed only in flowers.</text>
</comment>
<comment type="similarity">
    <text evidence="6">Belongs to the cyclophilin-type PPIase family.</text>
</comment>
<protein>
    <recommendedName>
        <fullName>Peptidyl-prolyl cis-trans isomerase CYP26-1</fullName>
        <shortName>PPIase CYP26-1</shortName>
        <ecNumber>5.2.1.8</ecNumber>
    </recommendedName>
    <alternativeName>
        <fullName>Cyclophilin of 26 kDa 1</fullName>
    </alternativeName>
    <alternativeName>
        <fullName>Cyclophilin-26-1</fullName>
    </alternativeName>
</protein>
<dbReference type="EC" id="5.2.1.8"/>
<dbReference type="EMBL" id="AY568523">
    <property type="protein sequence ID" value="AAS75306.1"/>
    <property type="molecule type" value="mRNA"/>
</dbReference>
<dbReference type="EMBL" id="AP001300">
    <property type="protein sequence ID" value="BAB03037.1"/>
    <property type="molecule type" value="Genomic_DNA"/>
</dbReference>
<dbReference type="EMBL" id="CP002686">
    <property type="protein sequence ID" value="AEE76691.1"/>
    <property type="molecule type" value="Genomic_DNA"/>
</dbReference>
<dbReference type="EMBL" id="BT029019">
    <property type="protein sequence ID" value="ABI93928.1"/>
    <property type="molecule type" value="mRNA"/>
</dbReference>
<dbReference type="RefSeq" id="NP_188932.1">
    <property type="nucleotide sequence ID" value="NM_113192.2"/>
</dbReference>
<dbReference type="SMR" id="Q9LIK6"/>
<dbReference type="STRING" id="3702.Q9LIK6"/>
<dbReference type="GlyCosmos" id="Q9LIK6">
    <property type="glycosylation" value="1 site, No reported glycans"/>
</dbReference>
<dbReference type="GlyGen" id="Q9LIK6">
    <property type="glycosylation" value="1 site"/>
</dbReference>
<dbReference type="PaxDb" id="3702-AT3G22920.1"/>
<dbReference type="ProteomicsDB" id="220332"/>
<dbReference type="EnsemblPlants" id="AT3G22920.1">
    <property type="protein sequence ID" value="AT3G22920.1"/>
    <property type="gene ID" value="AT3G22920"/>
</dbReference>
<dbReference type="GeneID" id="821864"/>
<dbReference type="Gramene" id="AT3G22920.1">
    <property type="protein sequence ID" value="AT3G22920.1"/>
    <property type="gene ID" value="AT3G22920"/>
</dbReference>
<dbReference type="KEGG" id="ath:AT3G22920"/>
<dbReference type="Araport" id="AT3G22920"/>
<dbReference type="TAIR" id="AT3G22920"/>
<dbReference type="eggNOG" id="KOG0865">
    <property type="taxonomic scope" value="Eukaryota"/>
</dbReference>
<dbReference type="HOGENOM" id="CLU_012062_4_3_1"/>
<dbReference type="InParanoid" id="Q9LIK6"/>
<dbReference type="OMA" id="HEDGPGI"/>
<dbReference type="PhylomeDB" id="Q9LIK6"/>
<dbReference type="PRO" id="PR:Q9LIK6"/>
<dbReference type="Proteomes" id="UP000006548">
    <property type="component" value="Chromosome 3"/>
</dbReference>
<dbReference type="ExpressionAtlas" id="Q9LIK6">
    <property type="expression patterns" value="baseline and differential"/>
</dbReference>
<dbReference type="GO" id="GO:0016020">
    <property type="term" value="C:membrane"/>
    <property type="evidence" value="ECO:0007669"/>
    <property type="project" value="UniProtKB-SubCell"/>
</dbReference>
<dbReference type="GO" id="GO:0003755">
    <property type="term" value="F:peptidyl-prolyl cis-trans isomerase activity"/>
    <property type="evidence" value="ECO:0007669"/>
    <property type="project" value="UniProtKB-KW"/>
</dbReference>
<dbReference type="FunFam" id="2.40.100.10:FF:000049">
    <property type="entry name" value="Peptidyl-prolyl cis-trans isomerase"/>
    <property type="match status" value="1"/>
</dbReference>
<dbReference type="Gene3D" id="2.40.100.10">
    <property type="entry name" value="Cyclophilin-like"/>
    <property type="match status" value="1"/>
</dbReference>
<dbReference type="InterPro" id="IPR029000">
    <property type="entry name" value="Cyclophilin-like_dom_sf"/>
</dbReference>
<dbReference type="InterPro" id="IPR002130">
    <property type="entry name" value="Cyclophilin-type_PPIase_dom"/>
</dbReference>
<dbReference type="PANTHER" id="PTHR11071">
    <property type="entry name" value="PEPTIDYL-PROLYL CIS-TRANS ISOMERASE"/>
    <property type="match status" value="1"/>
</dbReference>
<dbReference type="PANTHER" id="PTHR11071:SF552">
    <property type="entry name" value="PEPTIDYL-PROLYL CIS-TRANS ISOMERASE CYP26-1"/>
    <property type="match status" value="1"/>
</dbReference>
<dbReference type="Pfam" id="PF00160">
    <property type="entry name" value="Pro_isomerase"/>
    <property type="match status" value="1"/>
</dbReference>
<dbReference type="PRINTS" id="PR00153">
    <property type="entry name" value="CSAPPISMRASE"/>
</dbReference>
<dbReference type="SUPFAM" id="SSF50891">
    <property type="entry name" value="Cyclophilin-like"/>
    <property type="match status" value="1"/>
</dbReference>
<dbReference type="PROSITE" id="PS50072">
    <property type="entry name" value="CSA_PPIASE_2"/>
    <property type="match status" value="1"/>
</dbReference>